<feature type="signal peptide" evidence="2">
    <location>
        <begin position="1"/>
        <end position="21"/>
    </location>
</feature>
<feature type="chain" id="PRO_0000317631" description="Interferon epsilon">
    <location>
        <begin position="22"/>
        <end position="208"/>
    </location>
</feature>
<feature type="glycosylation site" description="N-linked (GlcNAc...) asparagine" evidence="2">
    <location>
        <position position="95"/>
    </location>
</feature>
<feature type="glycosylation site" description="N-linked (GlcNAc...) asparagine" evidence="2">
    <location>
        <position position="104"/>
    </location>
</feature>
<feature type="disulfide bond" evidence="1">
    <location>
        <begin position="53"/>
        <end position="163"/>
    </location>
</feature>
<feature type="sequence variant" id="VAR_049639" description="In dbSNP:rs1125488.">
    <original>Q</original>
    <variation>H</variation>
    <location>
        <position position="46"/>
    </location>
</feature>
<reference key="1">
    <citation type="journal article" date="2004" name="Genomics">
        <title>Characterization of the type I interferon locus and identification of novel genes.</title>
        <authorList>
            <person name="Hardy M.P."/>
            <person name="Owczarek C.M."/>
            <person name="Jermiin L.S."/>
            <person name="Ejdebaeck M."/>
            <person name="Hertzog P.J."/>
        </authorList>
    </citation>
    <scope>NUCLEOTIDE SEQUENCE [MRNA]</scope>
</reference>
<reference key="2">
    <citation type="journal article" date="2003" name="Genome Res.">
        <title>The secreted protein discovery initiative (SPDI), a large-scale effort to identify novel human secreted and transmembrane proteins: a bioinformatics assessment.</title>
        <authorList>
            <person name="Clark H.F."/>
            <person name="Gurney A.L."/>
            <person name="Abaya E."/>
            <person name="Baker K."/>
            <person name="Baldwin D.T."/>
            <person name="Brush J."/>
            <person name="Chen J."/>
            <person name="Chow B."/>
            <person name="Chui C."/>
            <person name="Crowley C."/>
            <person name="Currell B."/>
            <person name="Deuel B."/>
            <person name="Dowd P."/>
            <person name="Eaton D."/>
            <person name="Foster J.S."/>
            <person name="Grimaldi C."/>
            <person name="Gu Q."/>
            <person name="Hass P.E."/>
            <person name="Heldens S."/>
            <person name="Huang A."/>
            <person name="Kim H.S."/>
            <person name="Klimowski L."/>
            <person name="Jin Y."/>
            <person name="Johnson S."/>
            <person name="Lee J."/>
            <person name="Lewis L."/>
            <person name="Liao D."/>
            <person name="Mark M.R."/>
            <person name="Robbie E."/>
            <person name="Sanchez C."/>
            <person name="Schoenfeld J."/>
            <person name="Seshagiri S."/>
            <person name="Simmons L."/>
            <person name="Singh J."/>
            <person name="Smith V."/>
            <person name="Stinson J."/>
            <person name="Vagts A."/>
            <person name="Vandlen R.L."/>
            <person name="Watanabe C."/>
            <person name="Wieand D."/>
            <person name="Woods K."/>
            <person name="Xie M.-H."/>
            <person name="Yansura D.G."/>
            <person name="Yi S."/>
            <person name="Yu G."/>
            <person name="Yuan J."/>
            <person name="Zhang M."/>
            <person name="Zhang Z."/>
            <person name="Goddard A.D."/>
            <person name="Wood W.I."/>
            <person name="Godowski P.J."/>
            <person name="Gray A.M."/>
        </authorList>
    </citation>
    <scope>NUCLEOTIDE SEQUENCE [LARGE SCALE MRNA]</scope>
</reference>
<reference key="3">
    <citation type="journal article" date="2004" name="Genome Res.">
        <title>The status, quality, and expansion of the NIH full-length cDNA project: the Mammalian Gene Collection (MGC).</title>
        <authorList>
            <consortium name="The MGC Project Team"/>
        </authorList>
    </citation>
    <scope>NUCLEOTIDE SEQUENCE [LARGE SCALE MRNA]</scope>
</reference>
<reference key="4">
    <citation type="journal article" date="2013" name="Science">
        <title>Interferon-epsilon protects the female reproductive tract from viral and bacterial infection.</title>
        <authorList>
            <person name="Fung K.Y."/>
            <person name="Mangan N.E."/>
            <person name="Cumming H."/>
            <person name="Horvat J.C."/>
            <person name="Mayall J.R."/>
            <person name="Stifter S.A."/>
            <person name="De Weerd N."/>
            <person name="Roisman L.C."/>
            <person name="Rossjohn J."/>
            <person name="Robertson S.A."/>
            <person name="Schjenken J.E."/>
            <person name="Parker B."/>
            <person name="Gargett C.E."/>
            <person name="Nguyen H.P."/>
            <person name="Carr D.J."/>
            <person name="Hansbro P.M."/>
            <person name="Hertzog P.J."/>
        </authorList>
    </citation>
    <scope>INDUCTION</scope>
    <scope>TISSUE SPECIFICITY</scope>
    <scope>DEVELOPMENTAL STAGE</scope>
</reference>
<sequence length="208" mass="24414">MIIKHFFGTVLVLLASTTIFSLDLKLIIFQQRQVNQESLKLLNKLQTLSIQQCLPHRKNFLLPQKSLSPQQYQKGHTLAILHEMLQQIFSLFRANISLDGWEENHTEKFLIQLHQQLEYLEALMGLEAEKLSGTLGSDNLRLQVKMYFRRIHDYLENQDYSTCAWAIVQVEISRCLFFVFSLTEKLSKQGRPLNDMKQELTTEFRSPR</sequence>
<organism>
    <name type="scientific">Homo sapiens</name>
    <name type="common">Human</name>
    <dbReference type="NCBI Taxonomy" id="9606"/>
    <lineage>
        <taxon>Eukaryota</taxon>
        <taxon>Metazoa</taxon>
        <taxon>Chordata</taxon>
        <taxon>Craniata</taxon>
        <taxon>Vertebrata</taxon>
        <taxon>Euteleostomi</taxon>
        <taxon>Mammalia</taxon>
        <taxon>Eutheria</taxon>
        <taxon>Euarchontoglires</taxon>
        <taxon>Primates</taxon>
        <taxon>Haplorrhini</taxon>
        <taxon>Catarrhini</taxon>
        <taxon>Hominidae</taxon>
        <taxon>Homo</taxon>
    </lineage>
</organism>
<comment type="function">
    <text evidence="1">Type I interferon required for maintaining basal levels of IFN-regulated genes, including 2'-5'-oligoadenylate synthetase, IRF7 and ISG15, in the female reproductive tract. Directly mediates protection against viral and bacterial genital infections (By similarity).</text>
</comment>
<comment type="subcellular location">
    <subcellularLocation>
        <location evidence="4">Secreted</location>
    </subcellularLocation>
</comment>
<comment type="tissue specificity">
    <text evidence="3">Endometrium-specific.</text>
</comment>
<comment type="developmental stage">
    <text evidence="3">Highly expressed in endometrial epithelial cells in proliferative phase of the menstrual cycle. Levels decrease approximately 10-fold in the secretory phase. Virtually undetectable in samples from postmenopausal women.</text>
</comment>
<comment type="induction">
    <text evidence="5">By estrogens.</text>
</comment>
<comment type="similarity">
    <text evidence="4">Belongs to the alpha/beta interferon family.</text>
</comment>
<accession>Q86WN2</accession>
<proteinExistence type="evidence at transcript level"/>
<protein>
    <recommendedName>
        <fullName>Interferon epsilon</fullName>
        <shortName>IFN-epsilon</shortName>
    </recommendedName>
    <alternativeName>
        <fullName>Interferon epsilon-1</fullName>
    </alternativeName>
</protein>
<evidence type="ECO:0000250" key="1"/>
<evidence type="ECO:0000255" key="2"/>
<evidence type="ECO:0000269" key="3">
    <source>
    </source>
</evidence>
<evidence type="ECO:0000305" key="4"/>
<evidence type="ECO:0000305" key="5">
    <source>
    </source>
</evidence>
<name>IFNE_HUMAN</name>
<gene>
    <name type="primary">IFNE</name>
    <name type="synonym">IFNE1</name>
    <name type="ORF">UNQ360/PRO655</name>
</gene>
<keyword id="KW-0051">Antiviral defense</keyword>
<keyword id="KW-0202">Cytokine</keyword>
<keyword id="KW-1015">Disulfide bond</keyword>
<keyword id="KW-0325">Glycoprotein</keyword>
<keyword id="KW-1185">Reference proteome</keyword>
<keyword id="KW-0964">Secreted</keyword>
<keyword id="KW-0732">Signal</keyword>
<dbReference type="EMBL" id="AY190045">
    <property type="protein sequence ID" value="AAO38686.1"/>
    <property type="molecule type" value="mRNA"/>
</dbReference>
<dbReference type="EMBL" id="AY358570">
    <property type="protein sequence ID" value="AAQ88933.1"/>
    <property type="molecule type" value="mRNA"/>
</dbReference>
<dbReference type="EMBL" id="BC100871">
    <property type="protein sequence ID" value="AAI00872.1"/>
    <property type="molecule type" value="mRNA"/>
</dbReference>
<dbReference type="EMBL" id="BC100872">
    <property type="protein sequence ID" value="AAI00873.1"/>
    <property type="molecule type" value="mRNA"/>
</dbReference>
<dbReference type="EMBL" id="BC100873">
    <property type="protein sequence ID" value="AAI00874.1"/>
    <property type="molecule type" value="mRNA"/>
</dbReference>
<dbReference type="CCDS" id="CCDS34997.1"/>
<dbReference type="RefSeq" id="NP_795372.1">
    <property type="nucleotide sequence ID" value="NM_176891.5"/>
</dbReference>
<dbReference type="SMR" id="Q86WN2"/>
<dbReference type="BioGRID" id="130722">
    <property type="interactions" value="31"/>
</dbReference>
<dbReference type="ComplexPortal" id="CPX-6008">
    <property type="entry name" value="Interferon epsilon receptor-ligand complex"/>
</dbReference>
<dbReference type="FunCoup" id="Q86WN2">
    <property type="interactions" value="448"/>
</dbReference>
<dbReference type="IntAct" id="Q86WN2">
    <property type="interactions" value="25"/>
</dbReference>
<dbReference type="STRING" id="9606.ENSP00000418018"/>
<dbReference type="GlyCosmos" id="Q86WN2">
    <property type="glycosylation" value="2 sites, No reported glycans"/>
</dbReference>
<dbReference type="GlyGen" id="Q86WN2">
    <property type="glycosylation" value="2 sites"/>
</dbReference>
<dbReference type="iPTMnet" id="Q86WN2"/>
<dbReference type="PhosphoSitePlus" id="Q86WN2"/>
<dbReference type="BioMuta" id="IFNE"/>
<dbReference type="DMDM" id="74727686"/>
<dbReference type="MassIVE" id="Q86WN2"/>
<dbReference type="PaxDb" id="9606-ENSP00000418018"/>
<dbReference type="PeptideAtlas" id="Q86WN2"/>
<dbReference type="ProteomicsDB" id="70184"/>
<dbReference type="Antibodypedia" id="24882">
    <property type="antibodies" value="142 antibodies from 22 providers"/>
</dbReference>
<dbReference type="DNASU" id="338376"/>
<dbReference type="Ensembl" id="ENST00000448696.4">
    <property type="protein sequence ID" value="ENSP00000418018.2"/>
    <property type="gene ID" value="ENSG00000184995.7"/>
</dbReference>
<dbReference type="GeneID" id="338376"/>
<dbReference type="KEGG" id="hsa:338376"/>
<dbReference type="MANE-Select" id="ENST00000448696.4">
    <property type="protein sequence ID" value="ENSP00000418018.2"/>
    <property type="RefSeq nucleotide sequence ID" value="NM_176891.5"/>
    <property type="RefSeq protein sequence ID" value="NP_795372.1"/>
</dbReference>
<dbReference type="UCSC" id="uc003zpg.4">
    <property type="organism name" value="human"/>
</dbReference>
<dbReference type="AGR" id="HGNC:18163"/>
<dbReference type="CTD" id="338376"/>
<dbReference type="DisGeNET" id="338376"/>
<dbReference type="GeneCards" id="IFNE"/>
<dbReference type="HGNC" id="HGNC:18163">
    <property type="gene designation" value="IFNE"/>
</dbReference>
<dbReference type="HPA" id="ENSG00000184995">
    <property type="expression patterns" value="Tissue enhanced (esophagus)"/>
</dbReference>
<dbReference type="MIM" id="615223">
    <property type="type" value="gene"/>
</dbReference>
<dbReference type="neXtProt" id="NX_Q86WN2"/>
<dbReference type="OpenTargets" id="ENSG00000184995"/>
<dbReference type="PharmGKB" id="PA164720874"/>
<dbReference type="VEuPathDB" id="HostDB:ENSG00000184995"/>
<dbReference type="eggNOG" id="ENOG502S65R">
    <property type="taxonomic scope" value="Eukaryota"/>
</dbReference>
<dbReference type="GeneTree" id="ENSGT01000000214430"/>
<dbReference type="HOGENOM" id="CLU_109427_1_0_1"/>
<dbReference type="InParanoid" id="Q86WN2"/>
<dbReference type="OMA" id="QQCLPHR"/>
<dbReference type="OrthoDB" id="8922121at2759"/>
<dbReference type="PAN-GO" id="Q86WN2">
    <property type="GO annotations" value="12 GO annotations based on evolutionary models"/>
</dbReference>
<dbReference type="PhylomeDB" id="Q86WN2"/>
<dbReference type="TreeFam" id="TF336177"/>
<dbReference type="PathwayCommons" id="Q86WN2"/>
<dbReference type="SignaLink" id="Q86WN2"/>
<dbReference type="BioGRID-ORCS" id="338376">
    <property type="hits" value="11 hits in 1136 CRISPR screens"/>
</dbReference>
<dbReference type="GenomeRNAi" id="338376"/>
<dbReference type="Pharos" id="Q86WN2">
    <property type="development level" value="Tbio"/>
</dbReference>
<dbReference type="PRO" id="PR:Q86WN2"/>
<dbReference type="Proteomes" id="UP000005640">
    <property type="component" value="Chromosome 9"/>
</dbReference>
<dbReference type="RNAct" id="Q86WN2">
    <property type="molecule type" value="protein"/>
</dbReference>
<dbReference type="Bgee" id="ENSG00000184995">
    <property type="expression patterns" value="Expressed in stromal cell of endometrium and 59 other cell types or tissues"/>
</dbReference>
<dbReference type="GO" id="GO:0005615">
    <property type="term" value="C:extracellular space"/>
    <property type="evidence" value="ECO:0000318"/>
    <property type="project" value="GO_Central"/>
</dbReference>
<dbReference type="GO" id="GO:0005125">
    <property type="term" value="F:cytokine activity"/>
    <property type="evidence" value="ECO:0000318"/>
    <property type="project" value="GO_Central"/>
</dbReference>
<dbReference type="GO" id="GO:0005132">
    <property type="term" value="F:type I interferon receptor binding"/>
    <property type="evidence" value="ECO:0000318"/>
    <property type="project" value="GO_Central"/>
</dbReference>
<dbReference type="GO" id="GO:0002250">
    <property type="term" value="P:adaptive immune response"/>
    <property type="evidence" value="ECO:0000318"/>
    <property type="project" value="GO_Central"/>
</dbReference>
<dbReference type="GO" id="GO:0002312">
    <property type="term" value="P:B cell activation involved in immune response"/>
    <property type="evidence" value="ECO:0000318"/>
    <property type="project" value="GO_Central"/>
</dbReference>
<dbReference type="GO" id="GO:0098586">
    <property type="term" value="P:cellular response to virus"/>
    <property type="evidence" value="ECO:0000303"/>
    <property type="project" value="ComplexPortal"/>
</dbReference>
<dbReference type="GO" id="GO:0042742">
    <property type="term" value="P:defense response to bacterium"/>
    <property type="evidence" value="ECO:0000250"/>
    <property type="project" value="UniProtKB"/>
</dbReference>
<dbReference type="GO" id="GO:0051607">
    <property type="term" value="P:defense response to virus"/>
    <property type="evidence" value="ECO:0000250"/>
    <property type="project" value="UniProtKB"/>
</dbReference>
<dbReference type="GO" id="GO:0006959">
    <property type="term" value="P:humoral immune response"/>
    <property type="evidence" value="ECO:0000318"/>
    <property type="project" value="GO_Central"/>
</dbReference>
<dbReference type="GO" id="GO:0002323">
    <property type="term" value="P:natural killer cell activation involved in immune response"/>
    <property type="evidence" value="ECO:0000318"/>
    <property type="project" value="GO_Central"/>
</dbReference>
<dbReference type="GO" id="GO:0043330">
    <property type="term" value="P:response to exogenous dsRNA"/>
    <property type="evidence" value="ECO:0000318"/>
    <property type="project" value="GO_Central"/>
</dbReference>
<dbReference type="GO" id="GO:0002286">
    <property type="term" value="P:T cell activation involved in immune response"/>
    <property type="evidence" value="ECO:0000318"/>
    <property type="project" value="GO_Central"/>
</dbReference>
<dbReference type="GO" id="GO:0060337">
    <property type="term" value="P:type I interferon-mediated signaling pathway"/>
    <property type="evidence" value="ECO:0000318"/>
    <property type="project" value="GO_Central"/>
</dbReference>
<dbReference type="FunFam" id="1.20.1250.10:FF:000033">
    <property type="entry name" value="Interferon epsilon"/>
    <property type="match status" value="1"/>
</dbReference>
<dbReference type="Gene3D" id="1.20.1250.10">
    <property type="match status" value="1"/>
</dbReference>
<dbReference type="InterPro" id="IPR009079">
    <property type="entry name" value="4_helix_cytokine-like_core"/>
</dbReference>
<dbReference type="InterPro" id="IPR000471">
    <property type="entry name" value="Interferon_alpha/beta/delta"/>
</dbReference>
<dbReference type="PANTHER" id="PTHR11691:SF8">
    <property type="entry name" value="INTERFERON EPSILON"/>
    <property type="match status" value="1"/>
</dbReference>
<dbReference type="PANTHER" id="PTHR11691">
    <property type="entry name" value="TYPE I INTERFERON"/>
    <property type="match status" value="1"/>
</dbReference>
<dbReference type="Pfam" id="PF00143">
    <property type="entry name" value="Interferon"/>
    <property type="match status" value="1"/>
</dbReference>
<dbReference type="PRINTS" id="PR00266">
    <property type="entry name" value="INTERFERONAB"/>
</dbReference>
<dbReference type="SMART" id="SM00076">
    <property type="entry name" value="IFabd"/>
    <property type="match status" value="1"/>
</dbReference>
<dbReference type="SUPFAM" id="SSF47266">
    <property type="entry name" value="4-helical cytokines"/>
    <property type="match status" value="1"/>
</dbReference>
<dbReference type="PROSITE" id="PS00252">
    <property type="entry name" value="INTERFERON_A_B_D"/>
    <property type="match status" value="1"/>
</dbReference>